<protein>
    <recommendedName>
        <fullName evidence="1">Uncharacterized Nudix hydrolase NudL</fullName>
        <ecNumber evidence="1">3.6.1.-</ecNumber>
    </recommendedName>
</protein>
<proteinExistence type="inferred from homology"/>
<name>NUDL_SALTY</name>
<keyword id="KW-0378">Hydrolase</keyword>
<keyword id="KW-0460">Magnesium</keyword>
<keyword id="KW-0464">Manganese</keyword>
<keyword id="KW-0479">Metal-binding</keyword>
<keyword id="KW-1185">Reference proteome</keyword>
<comment type="function">
    <text evidence="1">Probably mediates the hydrolysis of some nucleoside diphosphate derivatives.</text>
</comment>
<comment type="cofactor">
    <cofactor evidence="1">
        <name>Mn(2+)</name>
        <dbReference type="ChEBI" id="CHEBI:29035"/>
    </cofactor>
    <cofactor evidence="1">
        <name>Mg(2+)</name>
        <dbReference type="ChEBI" id="CHEBI:18420"/>
    </cofactor>
</comment>
<comment type="similarity">
    <text evidence="1">Belongs to the Nudix hydrolase family. PCD1 subfamily.</text>
</comment>
<feature type="chain" id="PRO_0000057148" description="Uncharacterized Nudix hydrolase NudL">
    <location>
        <begin position="1"/>
        <end position="192"/>
    </location>
</feature>
<feature type="domain" description="Nudix hydrolase" evidence="1">
    <location>
        <begin position="29"/>
        <end position="160"/>
    </location>
</feature>
<feature type="short sequence motif" description="Nudix box">
    <location>
        <begin position="67"/>
        <end position="89"/>
    </location>
</feature>
<feature type="binding site" evidence="1">
    <location>
        <position position="83"/>
    </location>
    <ligand>
        <name>Mg(2+)</name>
        <dbReference type="ChEBI" id="CHEBI:18420"/>
    </ligand>
</feature>
<feature type="binding site" evidence="1">
    <location>
        <position position="87"/>
    </location>
    <ligand>
        <name>Mg(2+)</name>
        <dbReference type="ChEBI" id="CHEBI:18420"/>
    </ligand>
</feature>
<reference key="1">
    <citation type="journal article" date="2001" name="Nature">
        <title>Complete genome sequence of Salmonella enterica serovar Typhimurium LT2.</title>
        <authorList>
            <person name="McClelland M."/>
            <person name="Sanderson K.E."/>
            <person name="Spieth J."/>
            <person name="Clifton S.W."/>
            <person name="Latreille P."/>
            <person name="Courtney L."/>
            <person name="Porwollik S."/>
            <person name="Ali J."/>
            <person name="Dante M."/>
            <person name="Du F."/>
            <person name="Hou S."/>
            <person name="Layman D."/>
            <person name="Leonard S."/>
            <person name="Nguyen C."/>
            <person name="Scott K."/>
            <person name="Holmes A."/>
            <person name="Grewal N."/>
            <person name="Mulvaney E."/>
            <person name="Ryan E."/>
            <person name="Sun H."/>
            <person name="Florea L."/>
            <person name="Miller W."/>
            <person name="Stoneking T."/>
            <person name="Nhan M."/>
            <person name="Waterston R."/>
            <person name="Wilson R.K."/>
        </authorList>
    </citation>
    <scope>NUCLEOTIDE SEQUENCE [LARGE SCALE GENOMIC DNA]</scope>
    <source>
        <strain>LT2 / SGSC1412 / ATCC 700720</strain>
    </source>
</reference>
<reference key="2">
    <citation type="journal article" date="1988" name="Mol. Biol. Evol.">
        <title>Evolution of aminobenzoate synthases: nucleotide sequences of Salmonella typhimurium and Klebsiella aerogenes pabB.</title>
        <authorList>
            <person name="Goncharoff P."/>
            <person name="Nichols B.P."/>
        </authorList>
    </citation>
    <scope>NUCLEOTIDE SEQUENCE [GENOMIC DNA] OF 1-80</scope>
</reference>
<reference key="3">
    <citation type="journal article" date="1995" name="Nucleic Acids Res.">
        <title>Detection of new genes in a bacterial genome using Markov models for three gene classes.</title>
        <authorList>
            <person name="Borodovsky M."/>
            <person name="McIninch J."/>
            <person name="Koonin E.V."/>
            <person name="Rudd K.E."/>
            <person name="Medigue C."/>
            <person name="Danchin A."/>
        </authorList>
    </citation>
    <scope>IDENTIFICATION</scope>
</reference>
<sequence length="192" mass="21431">MDTSRLTLDHFLSRFQLLRPQMTHETLNQRQAAVLIPVVRRPQPGLLLTQRAIHLRKHAGQVAFPGGAVDSTDASLIAAALREAQEEVAIPPQAVEVIGVLPPVDSVTGFQVTPVVGIIPPNLPWRASEDEVSAVFEMPLAQALQLGRYHPLDVYRRGNSHRVWLSWYEHYFVWGMTANILRELALQIGVKP</sequence>
<gene>
    <name evidence="1" type="primary">nudL</name>
    <name type="ordered locus">STM1825</name>
</gene>
<dbReference type="EC" id="3.6.1.-" evidence="1"/>
<dbReference type="EMBL" id="AE006468">
    <property type="protein sequence ID" value="AAL20740.1"/>
    <property type="molecule type" value="Genomic_DNA"/>
</dbReference>
<dbReference type="EMBL" id="M22079">
    <property type="protein sequence ID" value="AAA88619.1"/>
    <property type="molecule type" value="Genomic_DNA"/>
</dbReference>
<dbReference type="RefSeq" id="WP_000381544.1">
    <property type="nucleotide sequence ID" value="NC_003197.2"/>
</dbReference>
<dbReference type="SMR" id="P0A2K9"/>
<dbReference type="STRING" id="99287.STM1825"/>
<dbReference type="PaxDb" id="99287-STM1825"/>
<dbReference type="KEGG" id="stm:STM1825"/>
<dbReference type="PATRIC" id="fig|99287.12.peg.1925"/>
<dbReference type="HOGENOM" id="CLU_040940_5_2_6"/>
<dbReference type="OMA" id="YYIWGAT"/>
<dbReference type="PhylomeDB" id="P0A2K9"/>
<dbReference type="BioCyc" id="SENT99287:STM1825-MONOMER"/>
<dbReference type="Proteomes" id="UP000001014">
    <property type="component" value="Chromosome"/>
</dbReference>
<dbReference type="GO" id="GO:0010945">
    <property type="term" value="F:coenzyme A diphosphatase activity"/>
    <property type="evidence" value="ECO:0007669"/>
    <property type="project" value="InterPro"/>
</dbReference>
<dbReference type="GO" id="GO:0000287">
    <property type="term" value="F:magnesium ion binding"/>
    <property type="evidence" value="ECO:0007669"/>
    <property type="project" value="UniProtKB-UniRule"/>
</dbReference>
<dbReference type="GO" id="GO:0030145">
    <property type="term" value="F:manganese ion binding"/>
    <property type="evidence" value="ECO:0007669"/>
    <property type="project" value="UniProtKB-UniRule"/>
</dbReference>
<dbReference type="GO" id="GO:0009132">
    <property type="term" value="P:nucleoside diphosphate metabolic process"/>
    <property type="evidence" value="ECO:0007669"/>
    <property type="project" value="InterPro"/>
</dbReference>
<dbReference type="CDD" id="cd03426">
    <property type="entry name" value="NUDIX_CoAse_Nudt7"/>
    <property type="match status" value="1"/>
</dbReference>
<dbReference type="Gene3D" id="3.90.79.10">
    <property type="entry name" value="Nucleoside Triphosphate Pyrophosphohydrolase"/>
    <property type="match status" value="1"/>
</dbReference>
<dbReference type="HAMAP" id="MF_01592">
    <property type="entry name" value="Nudix_NudL"/>
    <property type="match status" value="1"/>
</dbReference>
<dbReference type="InterPro" id="IPR045121">
    <property type="entry name" value="CoAse"/>
</dbReference>
<dbReference type="InterPro" id="IPR015797">
    <property type="entry name" value="NUDIX_hydrolase-like_dom_sf"/>
</dbReference>
<dbReference type="InterPro" id="IPR000086">
    <property type="entry name" value="NUDIX_hydrolase_dom"/>
</dbReference>
<dbReference type="InterPro" id="IPR000059">
    <property type="entry name" value="NUDIX_hydrolase_NudL_CS"/>
</dbReference>
<dbReference type="InterPro" id="IPR023735">
    <property type="entry name" value="Nudix_NudL"/>
</dbReference>
<dbReference type="NCBIfam" id="NF007980">
    <property type="entry name" value="PRK10707.1"/>
    <property type="match status" value="1"/>
</dbReference>
<dbReference type="PANTHER" id="PTHR12992:SF11">
    <property type="entry name" value="MITOCHONDRIAL COENZYME A DIPHOSPHATASE NUDT8"/>
    <property type="match status" value="1"/>
</dbReference>
<dbReference type="PANTHER" id="PTHR12992">
    <property type="entry name" value="NUDIX HYDROLASE"/>
    <property type="match status" value="1"/>
</dbReference>
<dbReference type="Pfam" id="PF00293">
    <property type="entry name" value="NUDIX"/>
    <property type="match status" value="1"/>
</dbReference>
<dbReference type="SUPFAM" id="SSF55811">
    <property type="entry name" value="Nudix"/>
    <property type="match status" value="1"/>
</dbReference>
<dbReference type="PROSITE" id="PS51462">
    <property type="entry name" value="NUDIX"/>
    <property type="match status" value="1"/>
</dbReference>
<dbReference type="PROSITE" id="PS01293">
    <property type="entry name" value="NUDIX_COA"/>
    <property type="match status" value="1"/>
</dbReference>
<organism>
    <name type="scientific">Salmonella typhimurium (strain LT2 / SGSC1412 / ATCC 700720)</name>
    <dbReference type="NCBI Taxonomy" id="99287"/>
    <lineage>
        <taxon>Bacteria</taxon>
        <taxon>Pseudomonadati</taxon>
        <taxon>Pseudomonadota</taxon>
        <taxon>Gammaproteobacteria</taxon>
        <taxon>Enterobacterales</taxon>
        <taxon>Enterobacteriaceae</taxon>
        <taxon>Salmonella</taxon>
    </lineage>
</organism>
<evidence type="ECO:0000255" key="1">
    <source>
        <dbReference type="HAMAP-Rule" id="MF_01592"/>
    </source>
</evidence>
<accession>P0A2K9</accession>
<accession>P43339</accession>